<evidence type="ECO:0000250" key="1"/>
<evidence type="ECO:0000255" key="2">
    <source>
        <dbReference type="PROSITE-ProRule" id="PRU00031"/>
    </source>
</evidence>
<evidence type="ECO:0000269" key="3">
    <source>
    </source>
</evidence>
<evidence type="ECO:0000303" key="4">
    <source>
    </source>
</evidence>
<evidence type="ECO:0000303" key="5">
    <source>
    </source>
</evidence>
<evidence type="ECO:0000305" key="6"/>
<evidence type="ECO:0000305" key="7">
    <source>
    </source>
</evidence>
<proteinExistence type="evidence at protein level"/>
<name>VKTI1_ANTFU</name>
<dbReference type="SMR" id="P0DMJ3"/>
<dbReference type="GO" id="GO:0005615">
    <property type="term" value="C:extracellular space"/>
    <property type="evidence" value="ECO:0007669"/>
    <property type="project" value="TreeGrafter"/>
</dbReference>
<dbReference type="GO" id="GO:0042151">
    <property type="term" value="C:nematocyst"/>
    <property type="evidence" value="ECO:0007669"/>
    <property type="project" value="UniProtKB-SubCell"/>
</dbReference>
<dbReference type="GO" id="GO:0004867">
    <property type="term" value="F:serine-type endopeptidase inhibitor activity"/>
    <property type="evidence" value="ECO:0007669"/>
    <property type="project" value="UniProtKB-KW"/>
</dbReference>
<dbReference type="CDD" id="cd00109">
    <property type="entry name" value="Kunitz-type"/>
    <property type="match status" value="1"/>
</dbReference>
<dbReference type="FunFam" id="4.10.410.10:FF:000021">
    <property type="entry name" value="Serine protease inhibitor, putative"/>
    <property type="match status" value="1"/>
</dbReference>
<dbReference type="Gene3D" id="4.10.410.10">
    <property type="entry name" value="Pancreatic trypsin inhibitor Kunitz domain"/>
    <property type="match status" value="1"/>
</dbReference>
<dbReference type="InterPro" id="IPR002223">
    <property type="entry name" value="Kunitz_BPTI"/>
</dbReference>
<dbReference type="InterPro" id="IPR036880">
    <property type="entry name" value="Kunitz_BPTI_sf"/>
</dbReference>
<dbReference type="InterPro" id="IPR020901">
    <property type="entry name" value="Prtase_inh_Kunz-CS"/>
</dbReference>
<dbReference type="InterPro" id="IPR050098">
    <property type="entry name" value="TFPI/VKTCI-like"/>
</dbReference>
<dbReference type="PANTHER" id="PTHR10083:SF374">
    <property type="entry name" value="BPTI_KUNITZ INHIBITOR DOMAIN-CONTAINING PROTEIN"/>
    <property type="match status" value="1"/>
</dbReference>
<dbReference type="PANTHER" id="PTHR10083">
    <property type="entry name" value="KUNITZ-TYPE PROTEASE INHIBITOR-RELATED"/>
    <property type="match status" value="1"/>
</dbReference>
<dbReference type="Pfam" id="PF00014">
    <property type="entry name" value="Kunitz_BPTI"/>
    <property type="match status" value="1"/>
</dbReference>
<dbReference type="PRINTS" id="PR00759">
    <property type="entry name" value="BASICPTASE"/>
</dbReference>
<dbReference type="SMART" id="SM00131">
    <property type="entry name" value="KU"/>
    <property type="match status" value="1"/>
</dbReference>
<dbReference type="SUPFAM" id="SSF57362">
    <property type="entry name" value="BPTI-like"/>
    <property type="match status" value="1"/>
</dbReference>
<dbReference type="PROSITE" id="PS00280">
    <property type="entry name" value="BPTI_KUNITZ_1"/>
    <property type="match status" value="1"/>
</dbReference>
<dbReference type="PROSITE" id="PS50279">
    <property type="entry name" value="BPTI_KUNITZ_2"/>
    <property type="match status" value="1"/>
</dbReference>
<sequence length="56" mass="6097">VPANCLLPMKVGFCRAHVPRFYYNSSSGKCEGFTYGGCGANANNFQTKAQCEKACR</sequence>
<reference key="1">
    <citation type="journal article" date="2008" name="Comp. Biochem. Physiol.">
        <title>Kunitz-type protease inhibitors from acrorhagi of three species of sea anemones.</title>
        <authorList>
            <person name="Minagawa S."/>
            <person name="Sugiyama M."/>
            <person name="Ishida M."/>
            <person name="Nagashima Y."/>
            <person name="Shiomi K."/>
        </authorList>
    </citation>
    <scope>PROTEIN SEQUENCE</scope>
    <scope>FUNCTION</scope>
    <scope>TISSUE SPECIFICITY</scope>
    <source>
        <tissue>Tentacle</tissue>
    </source>
</reference>
<reference key="2">
    <citation type="journal article" date="2012" name="Toxicon">
        <title>Development of a rational nomenclature for naming peptide and protein toxins from sea anemones.</title>
        <authorList>
            <person name="Oliveira J.S."/>
            <person name="Fuentes-Silva D."/>
            <person name="King G.F."/>
        </authorList>
    </citation>
    <scope>NOMENCLATURE</scope>
</reference>
<protein>
    <recommendedName>
        <fullName evidence="5">PI-actitoxin-Afv2a</fullName>
        <shortName evidence="5">PI-AITX-Afv2a</shortName>
    </recommendedName>
    <alternativeName>
        <fullName evidence="4">Kunitz-type protease inhibitor AFAPI-I</fullName>
    </alternativeName>
</protein>
<accession>P0DMJ3</accession>
<organism>
    <name type="scientific">Anthopleura fuscoviridis</name>
    <name type="common">Sea anemone</name>
    <dbReference type="NCBI Taxonomy" id="6111"/>
    <lineage>
        <taxon>Eukaryota</taxon>
        <taxon>Metazoa</taxon>
        <taxon>Cnidaria</taxon>
        <taxon>Anthozoa</taxon>
        <taxon>Hexacorallia</taxon>
        <taxon>Actiniaria</taxon>
        <taxon>Actiniidae</taxon>
        <taxon>Anthopleura</taxon>
    </lineage>
</organism>
<feature type="chain" id="PRO_0000429350" description="PI-actitoxin-Afv2a" evidence="3">
    <location>
        <begin position="1"/>
        <end position="56"/>
    </location>
</feature>
<feature type="domain" description="BPTI/Kunitz inhibitor" evidence="2">
    <location>
        <begin position="5"/>
        <end position="55"/>
    </location>
</feature>
<feature type="site" description="Reactive bond for trypsin" evidence="1">
    <location>
        <begin position="15"/>
        <end position="16"/>
    </location>
</feature>
<feature type="disulfide bond" evidence="2">
    <location>
        <begin position="5"/>
        <end position="55"/>
    </location>
</feature>
<feature type="disulfide bond" evidence="2">
    <location>
        <begin position="14"/>
        <end position="38"/>
    </location>
</feature>
<feature type="disulfide bond" evidence="2">
    <location>
        <begin position="30"/>
        <end position="51"/>
    </location>
</feature>
<keyword id="KW-0903">Direct protein sequencing</keyword>
<keyword id="KW-1015">Disulfide bond</keyword>
<keyword id="KW-0166">Nematocyst</keyword>
<keyword id="KW-0646">Protease inhibitor</keyword>
<keyword id="KW-0964">Secreted</keyword>
<keyword id="KW-0722">Serine protease inhibitor</keyword>
<comment type="function">
    <text evidence="3">Serine protease inhibitor that is strongly active against trypsin (950 IU/mg) and moderately active against plasmin.</text>
</comment>
<comment type="subcellular location">
    <subcellularLocation>
        <location evidence="6">Secreted</location>
    </subcellularLocation>
    <subcellularLocation>
        <location evidence="6">Nematocyst</location>
    </subcellularLocation>
</comment>
<comment type="tissue specificity">
    <text evidence="3">Expressed by acrorhagi.</text>
</comment>
<comment type="miscellaneous">
    <text evidence="7">Does not inhibit potassium channels (Kv), as well as metalloproteases, and cysteine proteases (papain and bromelain).</text>
</comment>
<comment type="similarity">
    <text evidence="6">Belongs to the venom Kunitz-type family. Sea anemone type 2 potassium channel toxin subfamily.</text>
</comment>